<proteinExistence type="inferred from homology"/>
<accession>A7HSW7</accession>
<reference key="1">
    <citation type="journal article" date="2011" name="Stand. Genomic Sci.">
        <title>Complete genome sequence of Parvibaculum lavamentivorans type strain (DS-1(T)).</title>
        <authorList>
            <person name="Schleheck D."/>
            <person name="Weiss M."/>
            <person name="Pitluck S."/>
            <person name="Bruce D."/>
            <person name="Land M.L."/>
            <person name="Han S."/>
            <person name="Saunders E."/>
            <person name="Tapia R."/>
            <person name="Detter C."/>
            <person name="Brettin T."/>
            <person name="Han J."/>
            <person name="Woyke T."/>
            <person name="Goodwin L."/>
            <person name="Pennacchio L."/>
            <person name="Nolan M."/>
            <person name="Cook A.M."/>
            <person name="Kjelleberg S."/>
            <person name="Thomas T."/>
        </authorList>
    </citation>
    <scope>NUCLEOTIDE SEQUENCE [LARGE SCALE GENOMIC DNA]</scope>
    <source>
        <strain>DS-1 / DSM 13023 / NCIMB 13966</strain>
    </source>
</reference>
<gene>
    <name evidence="1" type="primary">rlmN</name>
    <name type="ordered locus">Plav_1380</name>
</gene>
<organism>
    <name type="scientific">Parvibaculum lavamentivorans (strain DS-1 / DSM 13023 / NCIMB 13966)</name>
    <dbReference type="NCBI Taxonomy" id="402881"/>
    <lineage>
        <taxon>Bacteria</taxon>
        <taxon>Pseudomonadati</taxon>
        <taxon>Pseudomonadota</taxon>
        <taxon>Alphaproteobacteria</taxon>
        <taxon>Hyphomicrobiales</taxon>
        <taxon>Parvibaculaceae</taxon>
        <taxon>Parvibaculum</taxon>
    </lineage>
</organism>
<protein>
    <recommendedName>
        <fullName evidence="1">Dual-specificity RNA methyltransferase RlmN</fullName>
        <ecNumber evidence="1">2.1.1.192</ecNumber>
    </recommendedName>
    <alternativeName>
        <fullName evidence="1">23S rRNA (adenine(2503)-C(2))-methyltransferase</fullName>
    </alternativeName>
    <alternativeName>
        <fullName evidence="1">23S rRNA m2A2503 methyltransferase</fullName>
    </alternativeName>
    <alternativeName>
        <fullName evidence="1">Ribosomal RNA large subunit methyltransferase N</fullName>
    </alternativeName>
    <alternativeName>
        <fullName evidence="1">tRNA (adenine(37)-C(2))-methyltransferase</fullName>
    </alternativeName>
    <alternativeName>
        <fullName evidence="1">tRNA m2A37 methyltransferase</fullName>
    </alternativeName>
</protein>
<feature type="chain" id="PRO_0000350299" description="Dual-specificity RNA methyltransferase RlmN">
    <location>
        <begin position="1"/>
        <end position="399"/>
    </location>
</feature>
<feature type="domain" description="Radical SAM core" evidence="2">
    <location>
        <begin position="126"/>
        <end position="367"/>
    </location>
</feature>
<feature type="active site" description="Proton acceptor" evidence="1">
    <location>
        <position position="120"/>
    </location>
</feature>
<feature type="active site" description="S-methylcysteine intermediate" evidence="1">
    <location>
        <position position="372"/>
    </location>
</feature>
<feature type="binding site" evidence="1">
    <location>
        <position position="140"/>
    </location>
    <ligand>
        <name>[4Fe-4S] cluster</name>
        <dbReference type="ChEBI" id="CHEBI:49883"/>
        <note>4Fe-4S-S-AdoMet</note>
    </ligand>
</feature>
<feature type="binding site" evidence="1">
    <location>
        <position position="144"/>
    </location>
    <ligand>
        <name>[4Fe-4S] cluster</name>
        <dbReference type="ChEBI" id="CHEBI:49883"/>
        <note>4Fe-4S-S-AdoMet</note>
    </ligand>
</feature>
<feature type="binding site" evidence="1">
    <location>
        <position position="147"/>
    </location>
    <ligand>
        <name>[4Fe-4S] cluster</name>
        <dbReference type="ChEBI" id="CHEBI:49883"/>
        <note>4Fe-4S-S-AdoMet</note>
    </ligand>
</feature>
<feature type="binding site" evidence="1">
    <location>
        <begin position="198"/>
        <end position="199"/>
    </location>
    <ligand>
        <name>S-adenosyl-L-methionine</name>
        <dbReference type="ChEBI" id="CHEBI:59789"/>
    </ligand>
</feature>
<feature type="binding site" evidence="1">
    <location>
        <position position="230"/>
    </location>
    <ligand>
        <name>S-adenosyl-L-methionine</name>
        <dbReference type="ChEBI" id="CHEBI:59789"/>
    </ligand>
</feature>
<feature type="binding site" evidence="1">
    <location>
        <begin position="252"/>
        <end position="254"/>
    </location>
    <ligand>
        <name>S-adenosyl-L-methionine</name>
        <dbReference type="ChEBI" id="CHEBI:59789"/>
    </ligand>
</feature>
<feature type="binding site" evidence="1">
    <location>
        <position position="329"/>
    </location>
    <ligand>
        <name>S-adenosyl-L-methionine</name>
        <dbReference type="ChEBI" id="CHEBI:59789"/>
    </ligand>
</feature>
<feature type="disulfide bond" description="(transient)" evidence="1">
    <location>
        <begin position="133"/>
        <end position="372"/>
    </location>
</feature>
<sequence length="399" mass="43820">MASIDIAHERKTAATAGASARPHLAGLTRPLLMDALKAFGLPDNQLRMRAGQIWNGLYNRGFTDFERMTTLSKELRGKLADAFDISRLEIVTEQKSVDGTRKWLLRLPSGIPGVPGPEVETVYIPEEGRGTLCVSSQVGCTLTCTFCHTGTQKLVRNLTAGEIVGQILLARDALGEWPDGGRNSEDRLITNIVMMGMGEPLYNFENVRDALEVVSDGEGLSLSKRRITLSTSGVVPMIERAGEEIGCMLAISLHAVDDETRNRLVPLNKKYPIAELLEACRNYPGVSNARRITFEYVMLKGVNDSLEDAKALVRLLKHIPAKINLIPFNPWPGSPYECSDWEQIEKFADVVNRAGYASPVRTPRGRDIMAACGQLKSETVKARASERFKGEKAAAQPIA</sequence>
<evidence type="ECO:0000255" key="1">
    <source>
        <dbReference type="HAMAP-Rule" id="MF_01849"/>
    </source>
</evidence>
<evidence type="ECO:0000255" key="2">
    <source>
        <dbReference type="PROSITE-ProRule" id="PRU01266"/>
    </source>
</evidence>
<keyword id="KW-0004">4Fe-4S</keyword>
<keyword id="KW-0963">Cytoplasm</keyword>
<keyword id="KW-1015">Disulfide bond</keyword>
<keyword id="KW-0408">Iron</keyword>
<keyword id="KW-0411">Iron-sulfur</keyword>
<keyword id="KW-0479">Metal-binding</keyword>
<keyword id="KW-0489">Methyltransferase</keyword>
<keyword id="KW-1185">Reference proteome</keyword>
<keyword id="KW-0698">rRNA processing</keyword>
<keyword id="KW-0949">S-adenosyl-L-methionine</keyword>
<keyword id="KW-0808">Transferase</keyword>
<keyword id="KW-0819">tRNA processing</keyword>
<comment type="function">
    <text evidence="1">Specifically methylates position 2 of adenine 2503 in 23S rRNA and position 2 of adenine 37 in tRNAs. m2A2503 modification seems to play a crucial role in the proofreading step occurring at the peptidyl transferase center and thus would serve to optimize ribosomal fidelity.</text>
</comment>
<comment type="catalytic activity">
    <reaction evidence="1">
        <text>adenosine(2503) in 23S rRNA + 2 reduced [2Fe-2S]-[ferredoxin] + 2 S-adenosyl-L-methionine = 2-methyladenosine(2503) in 23S rRNA + 5'-deoxyadenosine + L-methionine + 2 oxidized [2Fe-2S]-[ferredoxin] + S-adenosyl-L-homocysteine</text>
        <dbReference type="Rhea" id="RHEA:42916"/>
        <dbReference type="Rhea" id="RHEA-COMP:10000"/>
        <dbReference type="Rhea" id="RHEA-COMP:10001"/>
        <dbReference type="Rhea" id="RHEA-COMP:10152"/>
        <dbReference type="Rhea" id="RHEA-COMP:10282"/>
        <dbReference type="ChEBI" id="CHEBI:17319"/>
        <dbReference type="ChEBI" id="CHEBI:33737"/>
        <dbReference type="ChEBI" id="CHEBI:33738"/>
        <dbReference type="ChEBI" id="CHEBI:57844"/>
        <dbReference type="ChEBI" id="CHEBI:57856"/>
        <dbReference type="ChEBI" id="CHEBI:59789"/>
        <dbReference type="ChEBI" id="CHEBI:74411"/>
        <dbReference type="ChEBI" id="CHEBI:74497"/>
        <dbReference type="EC" id="2.1.1.192"/>
    </reaction>
</comment>
<comment type="catalytic activity">
    <reaction evidence="1">
        <text>adenosine(37) in tRNA + 2 reduced [2Fe-2S]-[ferredoxin] + 2 S-adenosyl-L-methionine = 2-methyladenosine(37) in tRNA + 5'-deoxyadenosine + L-methionine + 2 oxidized [2Fe-2S]-[ferredoxin] + S-adenosyl-L-homocysteine</text>
        <dbReference type="Rhea" id="RHEA:43332"/>
        <dbReference type="Rhea" id="RHEA-COMP:10000"/>
        <dbReference type="Rhea" id="RHEA-COMP:10001"/>
        <dbReference type="Rhea" id="RHEA-COMP:10162"/>
        <dbReference type="Rhea" id="RHEA-COMP:10485"/>
        <dbReference type="ChEBI" id="CHEBI:17319"/>
        <dbReference type="ChEBI" id="CHEBI:33737"/>
        <dbReference type="ChEBI" id="CHEBI:33738"/>
        <dbReference type="ChEBI" id="CHEBI:57844"/>
        <dbReference type="ChEBI" id="CHEBI:57856"/>
        <dbReference type="ChEBI" id="CHEBI:59789"/>
        <dbReference type="ChEBI" id="CHEBI:74411"/>
        <dbReference type="ChEBI" id="CHEBI:74497"/>
        <dbReference type="EC" id="2.1.1.192"/>
    </reaction>
</comment>
<comment type="cofactor">
    <cofactor evidence="1">
        <name>[4Fe-4S] cluster</name>
        <dbReference type="ChEBI" id="CHEBI:49883"/>
    </cofactor>
    <text evidence="1">Binds 1 [4Fe-4S] cluster. The cluster is coordinated with 3 cysteines and an exchangeable S-adenosyl-L-methionine.</text>
</comment>
<comment type="subcellular location">
    <subcellularLocation>
        <location evidence="1">Cytoplasm</location>
    </subcellularLocation>
</comment>
<comment type="miscellaneous">
    <text evidence="1">Reaction proceeds by a ping-pong mechanism involving intermediate methylation of a conserved cysteine residue.</text>
</comment>
<comment type="similarity">
    <text evidence="1">Belongs to the radical SAM superfamily. RlmN family.</text>
</comment>
<name>RLMN_PARL1</name>
<dbReference type="EC" id="2.1.1.192" evidence="1"/>
<dbReference type="EMBL" id="CP000774">
    <property type="protein sequence ID" value="ABS63000.1"/>
    <property type="molecule type" value="Genomic_DNA"/>
</dbReference>
<dbReference type="RefSeq" id="WP_012110275.1">
    <property type="nucleotide sequence ID" value="NC_009719.1"/>
</dbReference>
<dbReference type="SMR" id="A7HSW7"/>
<dbReference type="STRING" id="402881.Plav_1380"/>
<dbReference type="KEGG" id="pla:Plav_1380"/>
<dbReference type="eggNOG" id="COG0820">
    <property type="taxonomic scope" value="Bacteria"/>
</dbReference>
<dbReference type="HOGENOM" id="CLU_029101_0_0_5"/>
<dbReference type="OrthoDB" id="9793973at2"/>
<dbReference type="Proteomes" id="UP000006377">
    <property type="component" value="Chromosome"/>
</dbReference>
<dbReference type="GO" id="GO:0005737">
    <property type="term" value="C:cytoplasm"/>
    <property type="evidence" value="ECO:0007669"/>
    <property type="project" value="UniProtKB-SubCell"/>
</dbReference>
<dbReference type="GO" id="GO:0051539">
    <property type="term" value="F:4 iron, 4 sulfur cluster binding"/>
    <property type="evidence" value="ECO:0007669"/>
    <property type="project" value="UniProtKB-UniRule"/>
</dbReference>
<dbReference type="GO" id="GO:0046872">
    <property type="term" value="F:metal ion binding"/>
    <property type="evidence" value="ECO:0007669"/>
    <property type="project" value="UniProtKB-KW"/>
</dbReference>
<dbReference type="GO" id="GO:0070040">
    <property type="term" value="F:rRNA (adenine(2503)-C2-)-methyltransferase activity"/>
    <property type="evidence" value="ECO:0007669"/>
    <property type="project" value="UniProtKB-UniRule"/>
</dbReference>
<dbReference type="GO" id="GO:0019843">
    <property type="term" value="F:rRNA binding"/>
    <property type="evidence" value="ECO:0007669"/>
    <property type="project" value="UniProtKB-UniRule"/>
</dbReference>
<dbReference type="GO" id="GO:0002935">
    <property type="term" value="F:tRNA (adenine(37)-C2)-methyltransferase activity"/>
    <property type="evidence" value="ECO:0007669"/>
    <property type="project" value="UniProtKB-UniRule"/>
</dbReference>
<dbReference type="GO" id="GO:0000049">
    <property type="term" value="F:tRNA binding"/>
    <property type="evidence" value="ECO:0007669"/>
    <property type="project" value="UniProtKB-UniRule"/>
</dbReference>
<dbReference type="GO" id="GO:0070475">
    <property type="term" value="P:rRNA base methylation"/>
    <property type="evidence" value="ECO:0007669"/>
    <property type="project" value="UniProtKB-UniRule"/>
</dbReference>
<dbReference type="GO" id="GO:0030488">
    <property type="term" value="P:tRNA methylation"/>
    <property type="evidence" value="ECO:0007669"/>
    <property type="project" value="UniProtKB-UniRule"/>
</dbReference>
<dbReference type="CDD" id="cd01335">
    <property type="entry name" value="Radical_SAM"/>
    <property type="match status" value="1"/>
</dbReference>
<dbReference type="FunFam" id="3.20.20.70:FF:000008">
    <property type="entry name" value="Dual-specificity RNA methyltransferase RlmN"/>
    <property type="match status" value="1"/>
</dbReference>
<dbReference type="Gene3D" id="1.10.150.530">
    <property type="match status" value="1"/>
</dbReference>
<dbReference type="Gene3D" id="3.20.20.70">
    <property type="entry name" value="Aldolase class I"/>
    <property type="match status" value="1"/>
</dbReference>
<dbReference type="HAMAP" id="MF_01849">
    <property type="entry name" value="RNA_methyltr_RlmN"/>
    <property type="match status" value="1"/>
</dbReference>
<dbReference type="InterPro" id="IPR013785">
    <property type="entry name" value="Aldolase_TIM"/>
</dbReference>
<dbReference type="InterPro" id="IPR040072">
    <property type="entry name" value="Methyltransferase_A"/>
</dbReference>
<dbReference type="InterPro" id="IPR048641">
    <property type="entry name" value="RlmN_N"/>
</dbReference>
<dbReference type="InterPro" id="IPR027492">
    <property type="entry name" value="RNA_MTrfase_RlmN"/>
</dbReference>
<dbReference type="InterPro" id="IPR004383">
    <property type="entry name" value="rRNA_lsu_MTrfase_RlmN/Cfr"/>
</dbReference>
<dbReference type="InterPro" id="IPR007197">
    <property type="entry name" value="rSAM"/>
</dbReference>
<dbReference type="NCBIfam" id="TIGR00048">
    <property type="entry name" value="rRNA_mod_RlmN"/>
    <property type="match status" value="1"/>
</dbReference>
<dbReference type="PANTHER" id="PTHR30544">
    <property type="entry name" value="23S RRNA METHYLTRANSFERASE"/>
    <property type="match status" value="1"/>
</dbReference>
<dbReference type="PANTHER" id="PTHR30544:SF5">
    <property type="entry name" value="RADICAL SAM CORE DOMAIN-CONTAINING PROTEIN"/>
    <property type="match status" value="1"/>
</dbReference>
<dbReference type="Pfam" id="PF04055">
    <property type="entry name" value="Radical_SAM"/>
    <property type="match status" value="1"/>
</dbReference>
<dbReference type="Pfam" id="PF21016">
    <property type="entry name" value="RlmN_N"/>
    <property type="match status" value="1"/>
</dbReference>
<dbReference type="PIRSF" id="PIRSF006004">
    <property type="entry name" value="CHP00048"/>
    <property type="match status" value="1"/>
</dbReference>
<dbReference type="SFLD" id="SFLDF00275">
    <property type="entry name" value="adenosine_C2_methyltransferase"/>
    <property type="match status" value="1"/>
</dbReference>
<dbReference type="SFLD" id="SFLDS00029">
    <property type="entry name" value="Radical_SAM"/>
    <property type="match status" value="1"/>
</dbReference>
<dbReference type="SUPFAM" id="SSF102114">
    <property type="entry name" value="Radical SAM enzymes"/>
    <property type="match status" value="1"/>
</dbReference>
<dbReference type="PROSITE" id="PS51918">
    <property type="entry name" value="RADICAL_SAM"/>
    <property type="match status" value="1"/>
</dbReference>